<protein>
    <recommendedName>
        <fullName>Bifunctional nuclease 2</fullName>
        <shortName>OsBBD2</shortName>
        <ecNumber>3.1.-.-</ecNumber>
    </recommendedName>
</protein>
<feature type="chain" id="PRO_0000419552" description="Bifunctional nuclease 2">
    <location>
        <begin position="1"/>
        <end position="325"/>
    </location>
</feature>
<feature type="domain" description="BFN">
    <location>
        <begin position="119"/>
        <end position="254"/>
    </location>
</feature>
<feature type="domain" description="UVR">
    <location>
        <begin position="285"/>
        <end position="320"/>
    </location>
</feature>
<reference key="1">
    <citation type="submission" date="2007-12" db="EMBL/GenBank/DDBJ databases">
        <title>Construction and characterization of a yeast two-hybrid cDNA library from rice seedling leaves.</title>
        <authorList>
            <person name="Lu L.M."/>
            <person name="Qin M.L."/>
            <person name="Lan H.H."/>
            <person name="Wang P."/>
            <person name="Niu X.Q."/>
            <person name="Wu Z.J."/>
            <person name="Xie L.H."/>
        </authorList>
    </citation>
    <scope>NUCLEOTIDE SEQUENCE [MRNA]</scope>
    <source>
        <strain>cv. Wuyujing 3</strain>
    </source>
</reference>
<reference key="2">
    <citation type="journal article" date="2005" name="Nature">
        <title>The map-based sequence of the rice genome.</title>
        <authorList>
            <consortium name="International rice genome sequencing project (IRGSP)"/>
        </authorList>
    </citation>
    <scope>NUCLEOTIDE SEQUENCE [LARGE SCALE GENOMIC DNA]</scope>
    <source>
        <strain>cv. Nipponbare</strain>
    </source>
</reference>
<reference key="3">
    <citation type="journal article" date="2008" name="Nucleic Acids Res.">
        <title>The rice annotation project database (RAP-DB): 2008 update.</title>
        <authorList>
            <consortium name="The rice annotation project (RAP)"/>
        </authorList>
    </citation>
    <scope>GENOME REANNOTATION</scope>
    <source>
        <strain>cv. Nipponbare</strain>
    </source>
</reference>
<reference key="4">
    <citation type="journal article" date="2013" name="Rice">
        <title>Improvement of the Oryza sativa Nipponbare reference genome using next generation sequence and optical map data.</title>
        <authorList>
            <person name="Kawahara Y."/>
            <person name="de la Bastide M."/>
            <person name="Hamilton J.P."/>
            <person name="Kanamori H."/>
            <person name="McCombie W.R."/>
            <person name="Ouyang S."/>
            <person name="Schwartz D.C."/>
            <person name="Tanaka T."/>
            <person name="Wu J."/>
            <person name="Zhou S."/>
            <person name="Childs K.L."/>
            <person name="Davidson R.M."/>
            <person name="Lin H."/>
            <person name="Quesada-Ocampo L."/>
            <person name="Vaillancourt B."/>
            <person name="Sakai H."/>
            <person name="Lee S.S."/>
            <person name="Kim J."/>
            <person name="Numa H."/>
            <person name="Itoh T."/>
            <person name="Buell C.R."/>
            <person name="Matsumoto T."/>
        </authorList>
    </citation>
    <scope>GENOME REANNOTATION</scope>
    <source>
        <strain>cv. Nipponbare</strain>
    </source>
</reference>
<reference key="5">
    <citation type="journal article" date="2005" name="PLoS Biol.">
        <title>The genomes of Oryza sativa: a history of duplications.</title>
        <authorList>
            <person name="Yu J."/>
            <person name="Wang J."/>
            <person name="Lin W."/>
            <person name="Li S."/>
            <person name="Li H."/>
            <person name="Zhou J."/>
            <person name="Ni P."/>
            <person name="Dong W."/>
            <person name="Hu S."/>
            <person name="Zeng C."/>
            <person name="Zhang J."/>
            <person name="Zhang Y."/>
            <person name="Li R."/>
            <person name="Xu Z."/>
            <person name="Li S."/>
            <person name="Li X."/>
            <person name="Zheng H."/>
            <person name="Cong L."/>
            <person name="Lin L."/>
            <person name="Yin J."/>
            <person name="Geng J."/>
            <person name="Li G."/>
            <person name="Shi J."/>
            <person name="Liu J."/>
            <person name="Lv H."/>
            <person name="Li J."/>
            <person name="Wang J."/>
            <person name="Deng Y."/>
            <person name="Ran L."/>
            <person name="Shi X."/>
            <person name="Wang X."/>
            <person name="Wu Q."/>
            <person name="Li C."/>
            <person name="Ren X."/>
            <person name="Wang J."/>
            <person name="Wang X."/>
            <person name="Li D."/>
            <person name="Liu D."/>
            <person name="Zhang X."/>
            <person name="Ji Z."/>
            <person name="Zhao W."/>
            <person name="Sun Y."/>
            <person name="Zhang Z."/>
            <person name="Bao J."/>
            <person name="Han Y."/>
            <person name="Dong L."/>
            <person name="Ji J."/>
            <person name="Chen P."/>
            <person name="Wu S."/>
            <person name="Liu J."/>
            <person name="Xiao Y."/>
            <person name="Bu D."/>
            <person name="Tan J."/>
            <person name="Yang L."/>
            <person name="Ye C."/>
            <person name="Zhang J."/>
            <person name="Xu J."/>
            <person name="Zhou Y."/>
            <person name="Yu Y."/>
            <person name="Zhang B."/>
            <person name="Zhuang S."/>
            <person name="Wei H."/>
            <person name="Liu B."/>
            <person name="Lei M."/>
            <person name="Yu H."/>
            <person name="Li Y."/>
            <person name="Xu H."/>
            <person name="Wei S."/>
            <person name="He X."/>
            <person name="Fang L."/>
            <person name="Zhang Z."/>
            <person name="Zhang Y."/>
            <person name="Huang X."/>
            <person name="Su Z."/>
            <person name="Tong W."/>
            <person name="Li J."/>
            <person name="Tong Z."/>
            <person name="Li S."/>
            <person name="Ye J."/>
            <person name="Wang L."/>
            <person name="Fang L."/>
            <person name="Lei T."/>
            <person name="Chen C.-S."/>
            <person name="Chen H.-C."/>
            <person name="Xu Z."/>
            <person name="Li H."/>
            <person name="Huang H."/>
            <person name="Zhang F."/>
            <person name="Xu H."/>
            <person name="Li N."/>
            <person name="Zhao C."/>
            <person name="Li S."/>
            <person name="Dong L."/>
            <person name="Huang Y."/>
            <person name="Li L."/>
            <person name="Xi Y."/>
            <person name="Qi Q."/>
            <person name="Li W."/>
            <person name="Zhang B."/>
            <person name="Hu W."/>
            <person name="Zhang Y."/>
            <person name="Tian X."/>
            <person name="Jiao Y."/>
            <person name="Liang X."/>
            <person name="Jin J."/>
            <person name="Gao L."/>
            <person name="Zheng W."/>
            <person name="Hao B."/>
            <person name="Liu S.-M."/>
            <person name="Wang W."/>
            <person name="Yuan L."/>
            <person name="Cao M."/>
            <person name="McDermott J."/>
            <person name="Samudrala R."/>
            <person name="Wang J."/>
            <person name="Wong G.K.-S."/>
            <person name="Yang H."/>
        </authorList>
    </citation>
    <scope>NUCLEOTIDE SEQUENCE [LARGE SCALE GENOMIC DNA]</scope>
    <source>
        <strain>cv. Nipponbare</strain>
    </source>
</reference>
<reference key="6">
    <citation type="journal article" date="2003" name="Science">
        <title>Collection, mapping, and annotation of over 28,000 cDNA clones from japonica rice.</title>
        <authorList>
            <consortium name="The rice full-length cDNA consortium"/>
        </authorList>
    </citation>
    <scope>NUCLEOTIDE SEQUENCE [LARGE SCALE MRNA]</scope>
    <source>
        <strain>cv. Nipponbare</strain>
    </source>
</reference>
<reference key="7">
    <citation type="journal article" date="2010" name="Plant Physiol.">
        <title>Novel bifunctional nucleases, OmBBD and AtBBD1, are involved in abscisic acid-mediated callose deposition in Arabidopsis.</title>
        <authorList>
            <person name="You M.K."/>
            <person name="Shin H.Y."/>
            <person name="Kim Y.J."/>
            <person name="Ok S.H."/>
            <person name="Cho S.K."/>
            <person name="Jeung J.U."/>
            <person name="Yoo S.D."/>
            <person name="Kim J.K."/>
            <person name="Shin J.S."/>
        </authorList>
    </citation>
    <scope>IDENTIFICATION</scope>
</reference>
<evidence type="ECO:0000250" key="1"/>
<evidence type="ECO:0000305" key="2"/>
<organism>
    <name type="scientific">Oryza sativa subsp. japonica</name>
    <name type="common">Rice</name>
    <dbReference type="NCBI Taxonomy" id="39947"/>
    <lineage>
        <taxon>Eukaryota</taxon>
        <taxon>Viridiplantae</taxon>
        <taxon>Streptophyta</taxon>
        <taxon>Embryophyta</taxon>
        <taxon>Tracheophyta</taxon>
        <taxon>Spermatophyta</taxon>
        <taxon>Magnoliopsida</taxon>
        <taxon>Liliopsida</taxon>
        <taxon>Poales</taxon>
        <taxon>Poaceae</taxon>
        <taxon>BOP clade</taxon>
        <taxon>Oryzoideae</taxon>
        <taxon>Oryzeae</taxon>
        <taxon>Oryzinae</taxon>
        <taxon>Oryza</taxon>
        <taxon>Oryza sativa</taxon>
    </lineage>
</organism>
<sequence length="325" mass="36038">MAMEGPILCRAVMQAKLPVTMISNSLTKSGQLGTAFLGCVCKYRNITRLISPIYQPAQKNFATVCGSFSSSSDGNGYMAGNFSESDEDYVNSTVLEAVEVRSGAEGYVIKMRDGKNLRCVHNNSQGRNIPESAPQPAIVLRIEDGSETLLPIIVLEMPSVLLMAAIRNVHIARPTIYQVVKEMIDKMGYEVKLVRINKRIQEAYCAELFLTKVGDHTESITFDLRPSDAINIAVRCKVPIQVHRSLAYSDGIRSVEPARMAIAAGMSDGLLFTELDRPDGQPCVEAQEFGLIRNMLIAAVEERYKDAATWRDKLMLLRSKRKNWA</sequence>
<proteinExistence type="evidence at transcript level"/>
<dbReference type="EC" id="3.1.-.-"/>
<dbReference type="EMBL" id="EU325988">
    <property type="protein sequence ID" value="ABY52937.1"/>
    <property type="molecule type" value="mRNA"/>
</dbReference>
<dbReference type="EMBL" id="AP005520">
    <property type="protein sequence ID" value="BAD03757.1"/>
    <property type="molecule type" value="Genomic_DNA"/>
</dbReference>
<dbReference type="EMBL" id="AP008214">
    <property type="protein sequence ID" value="BAF23538.2"/>
    <property type="status" value="ALT_SEQ"/>
    <property type="molecule type" value="Genomic_DNA"/>
</dbReference>
<dbReference type="EMBL" id="AP014964">
    <property type="protein sequence ID" value="BAT05082.1"/>
    <property type="molecule type" value="Genomic_DNA"/>
</dbReference>
<dbReference type="EMBL" id="CM000145">
    <property type="protein sequence ID" value="EAZ42463.1"/>
    <property type="status" value="ALT_SEQ"/>
    <property type="molecule type" value="Genomic_DNA"/>
</dbReference>
<dbReference type="EMBL" id="AK105899">
    <property type="protein sequence ID" value="BAG97425.1"/>
    <property type="molecule type" value="mRNA"/>
</dbReference>
<dbReference type="RefSeq" id="XP_015650236.1">
    <property type="nucleotide sequence ID" value="XM_015794750.1"/>
</dbReference>
<dbReference type="SMR" id="Q6YZM6"/>
<dbReference type="FunCoup" id="Q6YZM6">
    <property type="interactions" value="196"/>
</dbReference>
<dbReference type="STRING" id="39947.Q6YZM6"/>
<dbReference type="PaxDb" id="39947-Q6YZM6"/>
<dbReference type="EnsemblPlants" id="Os08t0357000-02">
    <property type="protein sequence ID" value="Os08t0357000-02"/>
    <property type="gene ID" value="Os08g0357000"/>
</dbReference>
<dbReference type="Gramene" id="Os08t0357000-02">
    <property type="protein sequence ID" value="Os08t0357000-02"/>
    <property type="gene ID" value="Os08g0357000"/>
</dbReference>
<dbReference type="KEGG" id="dosa:Os08g0357000"/>
<dbReference type="eggNOG" id="ENOG502QQ9S">
    <property type="taxonomic scope" value="Eukaryota"/>
</dbReference>
<dbReference type="HOGENOM" id="CLU_050306_1_0_1"/>
<dbReference type="InParanoid" id="Q6YZM6"/>
<dbReference type="OMA" id="QWRDKLS"/>
<dbReference type="OrthoDB" id="566255at2759"/>
<dbReference type="Proteomes" id="UP000000763">
    <property type="component" value="Chromosome 8"/>
</dbReference>
<dbReference type="Proteomes" id="UP000007752">
    <property type="component" value="Chromosome 8"/>
</dbReference>
<dbReference type="Proteomes" id="UP000059680">
    <property type="component" value="Chromosome 8"/>
</dbReference>
<dbReference type="ExpressionAtlas" id="Q6YZM6">
    <property type="expression patterns" value="baseline and differential"/>
</dbReference>
<dbReference type="GO" id="GO:0005634">
    <property type="term" value="C:nucleus"/>
    <property type="evidence" value="ECO:0000318"/>
    <property type="project" value="GO_Central"/>
</dbReference>
<dbReference type="GO" id="GO:0030891">
    <property type="term" value="C:VCB complex"/>
    <property type="evidence" value="ECO:0000318"/>
    <property type="project" value="GO_Central"/>
</dbReference>
<dbReference type="GO" id="GO:0004518">
    <property type="term" value="F:nuclease activity"/>
    <property type="evidence" value="ECO:0007669"/>
    <property type="project" value="UniProtKB-KW"/>
</dbReference>
<dbReference type="GO" id="GO:0016567">
    <property type="term" value="P:protein ubiquitination"/>
    <property type="evidence" value="ECO:0000318"/>
    <property type="project" value="GO_Central"/>
</dbReference>
<dbReference type="Gene3D" id="3.10.690.10">
    <property type="entry name" value="Bifunctional nuclease domain"/>
    <property type="match status" value="1"/>
</dbReference>
<dbReference type="InterPro" id="IPR036104">
    <property type="entry name" value="BFN_sf"/>
</dbReference>
<dbReference type="InterPro" id="IPR003729">
    <property type="entry name" value="Bi_nuclease_dom"/>
</dbReference>
<dbReference type="PANTHER" id="PTHR15160:SF3">
    <property type="entry name" value="BIFUNCTIONAL NUCLEASE 1"/>
    <property type="match status" value="1"/>
</dbReference>
<dbReference type="PANTHER" id="PTHR15160">
    <property type="entry name" value="VON HIPPEL-LINDAU PROTEIN"/>
    <property type="match status" value="1"/>
</dbReference>
<dbReference type="Pfam" id="PF02577">
    <property type="entry name" value="BFN_dom"/>
    <property type="match status" value="1"/>
</dbReference>
<dbReference type="SUPFAM" id="SSF103256">
    <property type="entry name" value="Hypothetical protein TM0160"/>
    <property type="match status" value="1"/>
</dbReference>
<dbReference type="PROSITE" id="PS51658">
    <property type="entry name" value="BFN"/>
    <property type="match status" value="1"/>
</dbReference>
<comment type="function">
    <text evidence="1">Bifunctional nuclease with both RNase and DNase activities. Involved in basal defense response. Participates in abscisic acid-derived callose deposition following infection by a necrotrophic pathogen (By similarity).</text>
</comment>
<comment type="subcellular location">
    <subcellularLocation>
        <location evidence="1">Nucleus</location>
    </subcellularLocation>
</comment>
<comment type="similarity">
    <text evidence="2">Belongs to the bifunctional nuclease family.</text>
</comment>
<comment type="sequence caution" evidence="2">
    <conflict type="erroneous gene model prediction">
        <sequence resource="EMBL-CDS" id="BAF23538"/>
    </conflict>
</comment>
<comment type="sequence caution" evidence="2">
    <conflict type="erroneous gene model prediction">
        <sequence resource="EMBL-CDS" id="EAZ42463"/>
    </conflict>
</comment>
<gene>
    <name type="primary">BBD2</name>
    <name type="ordered locus">Os08g0357000</name>
    <name type="ordered locus">LOC_Os08g26870</name>
    <name type="ORF">OsJ_27034</name>
    <name type="ORF">P0426E02.15</name>
</gene>
<keyword id="KW-0378">Hydrolase</keyword>
<keyword id="KW-0540">Nuclease</keyword>
<keyword id="KW-0539">Nucleus</keyword>
<keyword id="KW-1185">Reference proteome</keyword>
<name>BBD2_ORYSJ</name>
<accession>Q6YZM6</accession>
<accession>A0A0N7KPQ6</accession>
<accession>A3BSC4</accession>
<accession>Q0J677</accession>